<organism>
    <name type="scientific">Yersinia pseudotuberculosis serotype O:3 (strain YPIII)</name>
    <dbReference type="NCBI Taxonomy" id="502800"/>
    <lineage>
        <taxon>Bacteria</taxon>
        <taxon>Pseudomonadati</taxon>
        <taxon>Pseudomonadota</taxon>
        <taxon>Gammaproteobacteria</taxon>
        <taxon>Enterobacterales</taxon>
        <taxon>Yersiniaceae</taxon>
        <taxon>Yersinia</taxon>
    </lineage>
</organism>
<evidence type="ECO:0000255" key="1">
    <source>
        <dbReference type="HAMAP-Rule" id="MF_00148"/>
    </source>
</evidence>
<accession>B1JRB1</accession>
<protein>
    <recommendedName>
        <fullName evidence="1">Uracil-DNA glycosylase</fullName>
        <shortName evidence="1">UDG</shortName>
        <ecNumber evidence="1">3.2.2.27</ecNumber>
    </recommendedName>
</protein>
<reference key="1">
    <citation type="submission" date="2008-02" db="EMBL/GenBank/DDBJ databases">
        <title>Complete sequence of Yersinia pseudotuberculosis YPIII.</title>
        <authorList>
            <consortium name="US DOE Joint Genome Institute"/>
            <person name="Copeland A."/>
            <person name="Lucas S."/>
            <person name="Lapidus A."/>
            <person name="Glavina del Rio T."/>
            <person name="Dalin E."/>
            <person name="Tice H."/>
            <person name="Bruce D."/>
            <person name="Goodwin L."/>
            <person name="Pitluck S."/>
            <person name="Munk A.C."/>
            <person name="Brettin T."/>
            <person name="Detter J.C."/>
            <person name="Han C."/>
            <person name="Tapia R."/>
            <person name="Schmutz J."/>
            <person name="Larimer F."/>
            <person name="Land M."/>
            <person name="Hauser L."/>
            <person name="Challacombe J.F."/>
            <person name="Green L."/>
            <person name="Lindler L.E."/>
            <person name="Nikolich M.P."/>
            <person name="Richardson P."/>
        </authorList>
    </citation>
    <scope>NUCLEOTIDE SEQUENCE [LARGE SCALE GENOMIC DNA]</scope>
    <source>
        <strain>YPIII</strain>
    </source>
</reference>
<feature type="chain" id="PRO_1000096621" description="Uracil-DNA glycosylase">
    <location>
        <begin position="1"/>
        <end position="228"/>
    </location>
</feature>
<feature type="active site" description="Proton acceptor" evidence="1">
    <location>
        <position position="64"/>
    </location>
</feature>
<dbReference type="EC" id="3.2.2.27" evidence="1"/>
<dbReference type="EMBL" id="CP000950">
    <property type="protein sequence ID" value="ACA67471.1"/>
    <property type="molecule type" value="Genomic_DNA"/>
</dbReference>
<dbReference type="RefSeq" id="WP_012303780.1">
    <property type="nucleotide sequence ID" value="NZ_CP009792.1"/>
</dbReference>
<dbReference type="SMR" id="B1JRB1"/>
<dbReference type="KEGG" id="ypy:YPK_1173"/>
<dbReference type="PATRIC" id="fig|502800.11.peg.1809"/>
<dbReference type="GO" id="GO:0005737">
    <property type="term" value="C:cytoplasm"/>
    <property type="evidence" value="ECO:0007669"/>
    <property type="project" value="UniProtKB-SubCell"/>
</dbReference>
<dbReference type="GO" id="GO:0004844">
    <property type="term" value="F:uracil DNA N-glycosylase activity"/>
    <property type="evidence" value="ECO:0007669"/>
    <property type="project" value="UniProtKB-UniRule"/>
</dbReference>
<dbReference type="GO" id="GO:0097510">
    <property type="term" value="P:base-excision repair, AP site formation via deaminated base removal"/>
    <property type="evidence" value="ECO:0007669"/>
    <property type="project" value="TreeGrafter"/>
</dbReference>
<dbReference type="CDD" id="cd10027">
    <property type="entry name" value="UDG-F1-like"/>
    <property type="match status" value="1"/>
</dbReference>
<dbReference type="FunFam" id="3.40.470.10:FF:000001">
    <property type="entry name" value="Uracil-DNA glycosylase"/>
    <property type="match status" value="1"/>
</dbReference>
<dbReference type="Gene3D" id="3.40.470.10">
    <property type="entry name" value="Uracil-DNA glycosylase-like domain"/>
    <property type="match status" value="1"/>
</dbReference>
<dbReference type="HAMAP" id="MF_00148">
    <property type="entry name" value="UDG"/>
    <property type="match status" value="1"/>
</dbReference>
<dbReference type="InterPro" id="IPR002043">
    <property type="entry name" value="UDG_fam1"/>
</dbReference>
<dbReference type="InterPro" id="IPR018085">
    <property type="entry name" value="Ura-DNA_Glyclase_AS"/>
</dbReference>
<dbReference type="InterPro" id="IPR005122">
    <property type="entry name" value="Uracil-DNA_glycosylase-like"/>
</dbReference>
<dbReference type="InterPro" id="IPR036895">
    <property type="entry name" value="Uracil-DNA_glycosylase-like_sf"/>
</dbReference>
<dbReference type="NCBIfam" id="NF003588">
    <property type="entry name" value="PRK05254.1-1"/>
    <property type="match status" value="1"/>
</dbReference>
<dbReference type="NCBIfam" id="NF003589">
    <property type="entry name" value="PRK05254.1-2"/>
    <property type="match status" value="1"/>
</dbReference>
<dbReference type="NCBIfam" id="NF003591">
    <property type="entry name" value="PRK05254.1-4"/>
    <property type="match status" value="1"/>
</dbReference>
<dbReference type="NCBIfam" id="NF003592">
    <property type="entry name" value="PRK05254.1-5"/>
    <property type="match status" value="1"/>
</dbReference>
<dbReference type="NCBIfam" id="TIGR00628">
    <property type="entry name" value="ung"/>
    <property type="match status" value="1"/>
</dbReference>
<dbReference type="PANTHER" id="PTHR11264">
    <property type="entry name" value="URACIL-DNA GLYCOSYLASE"/>
    <property type="match status" value="1"/>
</dbReference>
<dbReference type="PANTHER" id="PTHR11264:SF0">
    <property type="entry name" value="URACIL-DNA GLYCOSYLASE"/>
    <property type="match status" value="1"/>
</dbReference>
<dbReference type="Pfam" id="PF03167">
    <property type="entry name" value="UDG"/>
    <property type="match status" value="1"/>
</dbReference>
<dbReference type="SMART" id="SM00986">
    <property type="entry name" value="UDG"/>
    <property type="match status" value="1"/>
</dbReference>
<dbReference type="SMART" id="SM00987">
    <property type="entry name" value="UreE_C"/>
    <property type="match status" value="1"/>
</dbReference>
<dbReference type="SUPFAM" id="SSF52141">
    <property type="entry name" value="Uracil-DNA glycosylase-like"/>
    <property type="match status" value="1"/>
</dbReference>
<dbReference type="PROSITE" id="PS00130">
    <property type="entry name" value="U_DNA_GLYCOSYLASE"/>
    <property type="match status" value="1"/>
</dbReference>
<gene>
    <name evidence="1" type="primary">ung</name>
    <name type="ordered locus">YPK_1173</name>
</gene>
<keyword id="KW-0963">Cytoplasm</keyword>
<keyword id="KW-0227">DNA damage</keyword>
<keyword id="KW-0234">DNA repair</keyword>
<keyword id="KW-0378">Hydrolase</keyword>
<proteinExistence type="inferred from homology"/>
<comment type="function">
    <text evidence="1">Excises uracil residues from the DNA which can arise as a result of misincorporation of dUMP residues by DNA polymerase or due to deamination of cytosine.</text>
</comment>
<comment type="catalytic activity">
    <reaction evidence="1">
        <text>Hydrolyzes single-stranded DNA or mismatched double-stranded DNA and polynucleotides, releasing free uracil.</text>
        <dbReference type="EC" id="3.2.2.27"/>
    </reaction>
</comment>
<comment type="subcellular location">
    <subcellularLocation>
        <location evidence="1">Cytoplasm</location>
    </subcellularLocation>
</comment>
<comment type="similarity">
    <text evidence="1">Belongs to the uracil-DNA glycosylase (UDG) superfamily. UNG family.</text>
</comment>
<name>UNG_YERPY</name>
<sequence length="228" mass="25587">MSPSLTWHDVIGQEKEQPYFKDTLAYVAAERRAGKTIYPPQKDIFNAFRLTELDQVKVVILGQDPYHGPNQAHGLSFSVLPGVPAPPSLGNIYKELVTDIPGFQRPNHGFLQSWAEQGVLLLNTVLTVEAGKAHSHANLGWETFTDRVIAALNEHREGVIFMLWGSHAQKKGRIINTERHYILKAPHPSPLSAHRGFLGCKHFSQANQLLQQQNQQPIDWQPKLPAVE</sequence>